<reference key="1">
    <citation type="journal article" date="2005" name="J. Bacteriol.">
        <title>Insights on evolution of virulence and resistance from the complete genome analysis of an early methicillin-resistant Staphylococcus aureus strain and a biofilm-producing methicillin-resistant Staphylococcus epidermidis strain.</title>
        <authorList>
            <person name="Gill S.R."/>
            <person name="Fouts D.E."/>
            <person name="Archer G.L."/>
            <person name="Mongodin E.F."/>
            <person name="DeBoy R.T."/>
            <person name="Ravel J."/>
            <person name="Paulsen I.T."/>
            <person name="Kolonay J.F."/>
            <person name="Brinkac L.M."/>
            <person name="Beanan M.J."/>
            <person name="Dodson R.J."/>
            <person name="Daugherty S.C."/>
            <person name="Madupu R."/>
            <person name="Angiuoli S.V."/>
            <person name="Durkin A.S."/>
            <person name="Haft D.H."/>
            <person name="Vamathevan J.J."/>
            <person name="Khouri H."/>
            <person name="Utterback T.R."/>
            <person name="Lee C."/>
            <person name="Dimitrov G."/>
            <person name="Jiang L."/>
            <person name="Qin H."/>
            <person name="Weidman J."/>
            <person name="Tran K."/>
            <person name="Kang K.H."/>
            <person name="Hance I.R."/>
            <person name="Nelson K.E."/>
            <person name="Fraser C.M."/>
        </authorList>
    </citation>
    <scope>NUCLEOTIDE SEQUENCE [LARGE SCALE GENOMIC DNA]</scope>
    <source>
        <strain>ATCC 35984 / DSM 28319 / BCRC 17069 / CCUG 31568 / BM 3577 / RP62A</strain>
    </source>
</reference>
<keyword id="KW-0002">3D-structure</keyword>
<keyword id="KW-0963">Cytoplasm</keyword>
<keyword id="KW-0255">Endonuclease</keyword>
<keyword id="KW-0269">Exonuclease</keyword>
<keyword id="KW-0378">Hydrolase</keyword>
<keyword id="KW-0479">Metal-binding</keyword>
<keyword id="KW-0540">Nuclease</keyword>
<keyword id="KW-1185">Reference proteome</keyword>
<keyword id="KW-0694">RNA-binding</keyword>
<keyword id="KW-0698">rRNA processing</keyword>
<keyword id="KW-0862">Zinc</keyword>
<proteinExistence type="evidence at protein level"/>
<protein>
    <recommendedName>
        <fullName evidence="2">Ribonuclease J 2</fullName>
        <shortName evidence="2">RNase J2</shortName>
        <ecNumber evidence="2">3.1.-.-</ecNumber>
    </recommendedName>
</protein>
<dbReference type="EC" id="3.1.-.-" evidence="2"/>
<dbReference type="EMBL" id="CP000029">
    <property type="protein sequence ID" value="AAW54211.1"/>
    <property type="status" value="ALT_INIT"/>
    <property type="molecule type" value="Genomic_DNA"/>
</dbReference>
<dbReference type="PDB" id="8YYF">
    <property type="method" value="X-ray"/>
    <property type="resolution" value="1.39 A"/>
    <property type="chains" value="A=1-557"/>
</dbReference>
<dbReference type="PDB" id="8YYG">
    <property type="method" value="X-ray"/>
    <property type="resolution" value="1.25 A"/>
    <property type="chains" value="A=1-557"/>
</dbReference>
<dbReference type="PDB" id="8YYH">
    <property type="method" value="X-ray"/>
    <property type="resolution" value="1.12 A"/>
    <property type="chains" value="A=1-557"/>
</dbReference>
<dbReference type="PDB" id="8YYI">
    <property type="method" value="X-ray"/>
    <property type="resolution" value="1.82 A"/>
    <property type="chains" value="A=1-557"/>
</dbReference>
<dbReference type="PDB" id="8YYJ">
    <property type="method" value="X-ray"/>
    <property type="resolution" value="3.00 A"/>
    <property type="chains" value="A/B/C/D=1-557"/>
</dbReference>
<dbReference type="PDB" id="8YYK">
    <property type="method" value="X-ray"/>
    <property type="resolution" value="3.20 A"/>
    <property type="chains" value="A/B/C/D=1-557"/>
</dbReference>
<dbReference type="PDBsum" id="8YYF"/>
<dbReference type="PDBsum" id="8YYG"/>
<dbReference type="PDBsum" id="8YYH"/>
<dbReference type="PDBsum" id="8YYI"/>
<dbReference type="PDBsum" id="8YYJ"/>
<dbReference type="PDBsum" id="8YYK"/>
<dbReference type="SMR" id="Q5HPR6"/>
<dbReference type="STRING" id="176279.SERP0842"/>
<dbReference type="KEGG" id="ser:SERP0842"/>
<dbReference type="eggNOG" id="COG0595">
    <property type="taxonomic scope" value="Bacteria"/>
</dbReference>
<dbReference type="HOGENOM" id="CLU_008727_3_1_9"/>
<dbReference type="Proteomes" id="UP000000531">
    <property type="component" value="Chromosome"/>
</dbReference>
<dbReference type="GO" id="GO:0005737">
    <property type="term" value="C:cytoplasm"/>
    <property type="evidence" value="ECO:0007669"/>
    <property type="project" value="UniProtKB-SubCell"/>
</dbReference>
<dbReference type="GO" id="GO:0004534">
    <property type="term" value="F:5'-3' RNA exonuclease activity"/>
    <property type="evidence" value="ECO:0007669"/>
    <property type="project" value="UniProtKB-UniRule"/>
</dbReference>
<dbReference type="GO" id="GO:0003723">
    <property type="term" value="F:RNA binding"/>
    <property type="evidence" value="ECO:0007669"/>
    <property type="project" value="UniProtKB-UniRule"/>
</dbReference>
<dbReference type="GO" id="GO:0004521">
    <property type="term" value="F:RNA endonuclease activity"/>
    <property type="evidence" value="ECO:0007669"/>
    <property type="project" value="UniProtKB-UniRule"/>
</dbReference>
<dbReference type="GO" id="GO:0008270">
    <property type="term" value="F:zinc ion binding"/>
    <property type="evidence" value="ECO:0007669"/>
    <property type="project" value="InterPro"/>
</dbReference>
<dbReference type="GO" id="GO:0006364">
    <property type="term" value="P:rRNA processing"/>
    <property type="evidence" value="ECO:0007669"/>
    <property type="project" value="UniProtKB-UniRule"/>
</dbReference>
<dbReference type="CDD" id="cd07714">
    <property type="entry name" value="RNaseJ_MBL-fold"/>
    <property type="match status" value="1"/>
</dbReference>
<dbReference type="FunFam" id="3.10.20.580:FF:000001">
    <property type="entry name" value="Ribonuclease J"/>
    <property type="match status" value="1"/>
</dbReference>
<dbReference type="FunFam" id="3.40.50.10710:FF:000002">
    <property type="entry name" value="Ribonuclease J 2"/>
    <property type="match status" value="1"/>
</dbReference>
<dbReference type="Gene3D" id="3.10.20.580">
    <property type="match status" value="1"/>
</dbReference>
<dbReference type="Gene3D" id="3.40.50.10710">
    <property type="entry name" value="Metallo-hydrolase/oxidoreductase"/>
    <property type="match status" value="1"/>
</dbReference>
<dbReference type="Gene3D" id="3.60.15.10">
    <property type="entry name" value="Ribonuclease Z/Hydroxyacylglutathione hydrolase-like"/>
    <property type="match status" value="1"/>
</dbReference>
<dbReference type="HAMAP" id="MF_01491">
    <property type="entry name" value="RNase_J_bact"/>
    <property type="match status" value="1"/>
</dbReference>
<dbReference type="InterPro" id="IPR001279">
    <property type="entry name" value="Metallo-B-lactamas"/>
</dbReference>
<dbReference type="InterPro" id="IPR036866">
    <property type="entry name" value="RibonucZ/Hydroxyglut_hydro"/>
</dbReference>
<dbReference type="InterPro" id="IPR011108">
    <property type="entry name" value="RMMBL"/>
</dbReference>
<dbReference type="InterPro" id="IPR004613">
    <property type="entry name" value="RNase_J"/>
</dbReference>
<dbReference type="InterPro" id="IPR042173">
    <property type="entry name" value="RNase_J_2"/>
</dbReference>
<dbReference type="InterPro" id="IPR055132">
    <property type="entry name" value="RNase_J_b_CASP"/>
</dbReference>
<dbReference type="InterPro" id="IPR030854">
    <property type="entry name" value="RNase_J_bac"/>
</dbReference>
<dbReference type="InterPro" id="IPR041636">
    <property type="entry name" value="RNase_J_C"/>
</dbReference>
<dbReference type="NCBIfam" id="TIGR00649">
    <property type="entry name" value="MG423"/>
    <property type="match status" value="1"/>
</dbReference>
<dbReference type="PANTHER" id="PTHR43694">
    <property type="entry name" value="RIBONUCLEASE J"/>
    <property type="match status" value="1"/>
</dbReference>
<dbReference type="PANTHER" id="PTHR43694:SF4">
    <property type="entry name" value="RIBONUCLEASE J 2"/>
    <property type="match status" value="1"/>
</dbReference>
<dbReference type="Pfam" id="PF00753">
    <property type="entry name" value="Lactamase_B"/>
    <property type="match status" value="1"/>
</dbReference>
<dbReference type="Pfam" id="PF07521">
    <property type="entry name" value="RMMBL"/>
    <property type="match status" value="1"/>
</dbReference>
<dbReference type="Pfam" id="PF22505">
    <property type="entry name" value="RNase_J_b_CASP"/>
    <property type="match status" value="1"/>
</dbReference>
<dbReference type="Pfam" id="PF17770">
    <property type="entry name" value="RNase_J_C"/>
    <property type="match status" value="1"/>
</dbReference>
<dbReference type="PIRSF" id="PIRSF004803">
    <property type="entry name" value="RnjA"/>
    <property type="match status" value="1"/>
</dbReference>
<dbReference type="SMART" id="SM00849">
    <property type="entry name" value="Lactamase_B"/>
    <property type="match status" value="1"/>
</dbReference>
<dbReference type="SUPFAM" id="SSF56281">
    <property type="entry name" value="Metallo-hydrolase/oxidoreductase"/>
    <property type="match status" value="1"/>
</dbReference>
<gene>
    <name evidence="2" type="primary">rnj2</name>
    <name type="ordered locus">SERP0842</name>
</gene>
<evidence type="ECO:0000250" key="1"/>
<evidence type="ECO:0000255" key="2">
    <source>
        <dbReference type="HAMAP-Rule" id="MF_01491"/>
    </source>
</evidence>
<evidence type="ECO:0000305" key="3"/>
<feature type="chain" id="PRO_0000286853" description="Ribonuclease J 2">
    <location>
        <begin position="1"/>
        <end position="557"/>
    </location>
</feature>
<feature type="binding site" evidence="2">
    <location>
        <position position="76"/>
    </location>
    <ligand>
        <name>Zn(2+)</name>
        <dbReference type="ChEBI" id="CHEBI:29105"/>
        <note>catalytic</note>
    </ligand>
</feature>
<feature type="binding site" evidence="2">
    <location>
        <position position="78"/>
    </location>
    <ligand>
        <name>Zn(2+)</name>
        <dbReference type="ChEBI" id="CHEBI:29105"/>
        <note>catalytic</note>
    </ligand>
</feature>
<feature type="binding site" evidence="2">
    <location>
        <position position="144"/>
    </location>
    <ligand>
        <name>Zn(2+)</name>
        <dbReference type="ChEBI" id="CHEBI:29105"/>
        <note>catalytic</note>
    </ligand>
</feature>
<feature type="binding site" evidence="2">
    <location>
        <position position="166"/>
    </location>
    <ligand>
        <name>Zn(2+)</name>
        <dbReference type="ChEBI" id="CHEBI:29105"/>
        <note>catalytic</note>
    </ligand>
</feature>
<feature type="binding site" evidence="2">
    <location>
        <begin position="366"/>
        <end position="370"/>
    </location>
    <ligand>
        <name>substrate</name>
    </ligand>
</feature>
<organism>
    <name type="scientific">Staphylococcus epidermidis (strain ATCC 35984 / DSM 28319 / BCRC 17069 / CCUG 31568 / BM 3577 / RP62A)</name>
    <dbReference type="NCBI Taxonomy" id="176279"/>
    <lineage>
        <taxon>Bacteria</taxon>
        <taxon>Bacillati</taxon>
        <taxon>Bacillota</taxon>
        <taxon>Bacilli</taxon>
        <taxon>Bacillales</taxon>
        <taxon>Staphylococcaceae</taxon>
        <taxon>Staphylococcus</taxon>
    </lineage>
</organism>
<comment type="function">
    <text evidence="1">An RNase that has 5'-3' exonuclease and possibly endoonuclease activity. Involved in maturation of rRNA and in some organisms also mRNA maturation and/or decay (By similarity).</text>
</comment>
<comment type="cofactor">
    <cofactor evidence="2">
        <name>Zn(2+)</name>
        <dbReference type="ChEBI" id="CHEBI:29105"/>
    </cofactor>
    <text evidence="2">Binds up to 2 Zn(2+) ions per subunit. It is not clear if Zn(2+) or Mg(2+) is physiologically important.</text>
</comment>
<comment type="subunit">
    <text evidence="2">Homodimer, may be a subunit of the RNA degradosome.</text>
</comment>
<comment type="subcellular location">
    <subcellularLocation>
        <location evidence="2">Cytoplasm</location>
    </subcellularLocation>
</comment>
<comment type="similarity">
    <text evidence="2">Belongs to the metallo-beta-lactamase superfamily. RNA-metabolizing metallo-beta-lactamase-like family. Bacterial RNase J subfamily.</text>
</comment>
<comment type="sequence caution" evidence="3">
    <conflict type="erroneous initiation">
        <sequence resource="EMBL-CDS" id="AAW54211"/>
    </conflict>
    <text>Extended N-terminus.</text>
</comment>
<sequence length="557" mass="62677">MSLIKKKNKDIRIIPLGGVGEIAKNMYIVEVDDEMFMLDAGLMFPEDEMLGVDIVIPDIQYVIENKERLKGIFLTHGHEHAIGAVSYVLEQIDAPVYGSKLTIALVKEAMKARNIKKKVRYYTVNHDSIMRFKNVNVSFFNTTHSIPDSLGVCIHTSYGSIVYTGEFKFDQSLHGHYAPDLKRMAEIGDEGVFALISDSTEAEKPGYNTPENIIEHHMYDAFAKVKGRLIVSCYASNFVRIQQVLNIASQLNRKVSFLGRSLESSFNIARKMGYFDIPKDLLIPINEVENYPKNEVIIIATGMQGEPVEALSQMARKKHKIMNIEEGDSIFLAITASANMEVIIADTLNELVRAGAHIIPNNKKIHASSHGCMEELKMMLNIMKPEYFVPVQGEFKMQIAHAKLAAETGVAPEKIFLVEKGDVISYNGKDMILNEKVQSGNILIDGIGVGDVGNIVLRDRHLLAEDGIFIAVVTLDPKNRRIAAGPEIQSRGFVYVRESEELLKEAEEKVRKIVEEGLQEKRIEWSEIKQNMRDQISKLLFESTKRRPMIIPVISEI</sequence>
<name>RNJ2_STAEQ</name>
<accession>Q5HPR6</accession>